<name>YORI_TTV1K</name>
<feature type="chain" id="PRO_0000222975" description="Uncharacterized 16.5 kDa protein">
    <location>
        <begin position="1"/>
        <end position="146"/>
    </location>
</feature>
<dbReference type="EMBL" id="X14855">
    <property type="protein sequence ID" value="CAA32988.1"/>
    <property type="molecule type" value="Genomic_DNA"/>
</dbReference>
<dbReference type="SMR" id="P19293"/>
<dbReference type="Proteomes" id="UP000009250">
    <property type="component" value="Genome"/>
</dbReference>
<accession>P19293</accession>
<protein>
    <recommendedName>
        <fullName>Uncharacterized 16.5 kDa protein</fullName>
    </recommendedName>
</protein>
<sequence length="146" mass="16508">MITSNITTNAINQVDPKAVQTGLKIFRILKKIREGQVDVNEIDSLPFAKEFYIKTGRSLGKLIQDMMGSDPDKALELFLGAFMRGEELNKAIQFHKELIAELSKEDGADLCTKVNRVLEKYGSRIDCENAEMSVEMAERLVREIIE</sequence>
<reference key="1">
    <citation type="submission" date="1989-03" db="EMBL/GenBank/DDBJ databases">
        <authorList>
            <person name="Neumann H."/>
        </authorList>
    </citation>
    <scope>NUCLEOTIDE SEQUENCE [GENOMIC DNA]</scope>
</reference>
<organism>
    <name type="scientific">Thermoproteus tenax virus 1 (strain KRA1)</name>
    <name type="common">TTV1</name>
    <dbReference type="NCBI Taxonomy" id="10480"/>
    <lineage>
        <taxon>Viruses</taxon>
        <taxon>Adnaviria</taxon>
        <taxon>Zilligvirae</taxon>
        <taxon>Taleaviricota</taxon>
        <taxon>Tokiviricetes</taxon>
        <taxon>Primavirales</taxon>
        <taxon>Tristromaviridae</taxon>
        <taxon>Betatristromavirus</taxon>
        <taxon>Betatristromavirus TTV1</taxon>
    </lineage>
</organism>
<organismHost>
    <name type="scientific">Thermoproteus tenax</name>
    <dbReference type="NCBI Taxonomy" id="2271"/>
</organismHost>
<keyword id="KW-1185">Reference proteome</keyword>
<proteinExistence type="predicted"/>